<evidence type="ECO:0000255" key="1">
    <source>
        <dbReference type="HAMAP-Rule" id="MF_01347"/>
    </source>
</evidence>
<proteinExistence type="inferred from homology"/>
<name>ATPB_NEIMF</name>
<gene>
    <name evidence="1" type="primary">atpD</name>
    <name type="ordered locus">NMC1906</name>
</gene>
<protein>
    <recommendedName>
        <fullName evidence="1">ATP synthase subunit beta</fullName>
        <ecNumber evidence="1">7.1.2.2</ecNumber>
    </recommendedName>
    <alternativeName>
        <fullName evidence="1">ATP synthase F1 sector subunit beta</fullName>
    </alternativeName>
    <alternativeName>
        <fullName evidence="1">F-ATPase subunit beta</fullName>
    </alternativeName>
</protein>
<feature type="chain" id="PRO_1000055138" description="ATP synthase subunit beta">
    <location>
        <begin position="1"/>
        <end position="465"/>
    </location>
</feature>
<feature type="binding site" evidence="1">
    <location>
        <begin position="148"/>
        <end position="155"/>
    </location>
    <ligand>
        <name>ATP</name>
        <dbReference type="ChEBI" id="CHEBI:30616"/>
    </ligand>
</feature>
<keyword id="KW-0066">ATP synthesis</keyword>
<keyword id="KW-0067">ATP-binding</keyword>
<keyword id="KW-0997">Cell inner membrane</keyword>
<keyword id="KW-1003">Cell membrane</keyword>
<keyword id="KW-0139">CF(1)</keyword>
<keyword id="KW-0375">Hydrogen ion transport</keyword>
<keyword id="KW-0406">Ion transport</keyword>
<keyword id="KW-0472">Membrane</keyword>
<keyword id="KW-0547">Nucleotide-binding</keyword>
<keyword id="KW-1278">Translocase</keyword>
<keyword id="KW-0813">Transport</keyword>
<dbReference type="EC" id="7.1.2.2" evidence="1"/>
<dbReference type="EMBL" id="AM421808">
    <property type="protein sequence ID" value="CAM11067.1"/>
    <property type="molecule type" value="Genomic_DNA"/>
</dbReference>
<dbReference type="RefSeq" id="WP_002218047.1">
    <property type="nucleotide sequence ID" value="NC_008767.1"/>
</dbReference>
<dbReference type="SMR" id="A1KW11"/>
<dbReference type="KEGG" id="nmc:NMC1906"/>
<dbReference type="HOGENOM" id="CLU_022398_0_2_4"/>
<dbReference type="Proteomes" id="UP000002286">
    <property type="component" value="Chromosome"/>
</dbReference>
<dbReference type="GO" id="GO:0005886">
    <property type="term" value="C:plasma membrane"/>
    <property type="evidence" value="ECO:0007669"/>
    <property type="project" value="UniProtKB-SubCell"/>
</dbReference>
<dbReference type="GO" id="GO:0045259">
    <property type="term" value="C:proton-transporting ATP synthase complex"/>
    <property type="evidence" value="ECO:0007669"/>
    <property type="project" value="UniProtKB-KW"/>
</dbReference>
<dbReference type="GO" id="GO:0005524">
    <property type="term" value="F:ATP binding"/>
    <property type="evidence" value="ECO:0007669"/>
    <property type="project" value="UniProtKB-UniRule"/>
</dbReference>
<dbReference type="GO" id="GO:0016887">
    <property type="term" value="F:ATP hydrolysis activity"/>
    <property type="evidence" value="ECO:0007669"/>
    <property type="project" value="InterPro"/>
</dbReference>
<dbReference type="GO" id="GO:0046933">
    <property type="term" value="F:proton-transporting ATP synthase activity, rotational mechanism"/>
    <property type="evidence" value="ECO:0007669"/>
    <property type="project" value="UniProtKB-UniRule"/>
</dbReference>
<dbReference type="CDD" id="cd18110">
    <property type="entry name" value="ATP-synt_F1_beta_C"/>
    <property type="match status" value="1"/>
</dbReference>
<dbReference type="CDD" id="cd18115">
    <property type="entry name" value="ATP-synt_F1_beta_N"/>
    <property type="match status" value="1"/>
</dbReference>
<dbReference type="CDD" id="cd01133">
    <property type="entry name" value="F1-ATPase_beta_CD"/>
    <property type="match status" value="1"/>
</dbReference>
<dbReference type="FunFam" id="1.10.1140.10:FF:000001">
    <property type="entry name" value="ATP synthase subunit beta"/>
    <property type="match status" value="1"/>
</dbReference>
<dbReference type="FunFam" id="2.40.10.170:FF:000003">
    <property type="entry name" value="ATP synthase subunit beta"/>
    <property type="match status" value="1"/>
</dbReference>
<dbReference type="FunFam" id="3.40.50.300:FF:000004">
    <property type="entry name" value="ATP synthase subunit beta"/>
    <property type="match status" value="1"/>
</dbReference>
<dbReference type="Gene3D" id="2.40.10.170">
    <property type="match status" value="1"/>
</dbReference>
<dbReference type="Gene3D" id="1.10.1140.10">
    <property type="entry name" value="Bovine Mitochondrial F1-atpase, Atp Synthase Beta Chain, Chain D, domain 3"/>
    <property type="match status" value="1"/>
</dbReference>
<dbReference type="Gene3D" id="3.40.50.300">
    <property type="entry name" value="P-loop containing nucleotide triphosphate hydrolases"/>
    <property type="match status" value="1"/>
</dbReference>
<dbReference type="HAMAP" id="MF_01347">
    <property type="entry name" value="ATP_synth_beta_bact"/>
    <property type="match status" value="1"/>
</dbReference>
<dbReference type="InterPro" id="IPR003593">
    <property type="entry name" value="AAA+_ATPase"/>
</dbReference>
<dbReference type="InterPro" id="IPR055190">
    <property type="entry name" value="ATP-synt_VA_C"/>
</dbReference>
<dbReference type="InterPro" id="IPR005722">
    <property type="entry name" value="ATP_synth_F1_bsu"/>
</dbReference>
<dbReference type="InterPro" id="IPR020003">
    <property type="entry name" value="ATPase_a/bsu_AS"/>
</dbReference>
<dbReference type="InterPro" id="IPR050053">
    <property type="entry name" value="ATPase_alpha/beta_chains"/>
</dbReference>
<dbReference type="InterPro" id="IPR004100">
    <property type="entry name" value="ATPase_F1/V1/A1_a/bsu_N"/>
</dbReference>
<dbReference type="InterPro" id="IPR036121">
    <property type="entry name" value="ATPase_F1/V1/A1_a/bsu_N_sf"/>
</dbReference>
<dbReference type="InterPro" id="IPR000194">
    <property type="entry name" value="ATPase_F1/V1/A1_a/bsu_nucl-bd"/>
</dbReference>
<dbReference type="InterPro" id="IPR024034">
    <property type="entry name" value="ATPase_F1/V1_b/a_C"/>
</dbReference>
<dbReference type="InterPro" id="IPR027417">
    <property type="entry name" value="P-loop_NTPase"/>
</dbReference>
<dbReference type="NCBIfam" id="TIGR01039">
    <property type="entry name" value="atpD"/>
    <property type="match status" value="1"/>
</dbReference>
<dbReference type="PANTHER" id="PTHR15184">
    <property type="entry name" value="ATP SYNTHASE"/>
    <property type="match status" value="1"/>
</dbReference>
<dbReference type="PANTHER" id="PTHR15184:SF71">
    <property type="entry name" value="ATP SYNTHASE SUBUNIT BETA, MITOCHONDRIAL"/>
    <property type="match status" value="1"/>
</dbReference>
<dbReference type="Pfam" id="PF00006">
    <property type="entry name" value="ATP-synt_ab"/>
    <property type="match status" value="1"/>
</dbReference>
<dbReference type="Pfam" id="PF02874">
    <property type="entry name" value="ATP-synt_ab_N"/>
    <property type="match status" value="1"/>
</dbReference>
<dbReference type="Pfam" id="PF22919">
    <property type="entry name" value="ATP-synt_VA_C"/>
    <property type="match status" value="1"/>
</dbReference>
<dbReference type="SMART" id="SM00382">
    <property type="entry name" value="AAA"/>
    <property type="match status" value="1"/>
</dbReference>
<dbReference type="SUPFAM" id="SSF47917">
    <property type="entry name" value="C-terminal domain of alpha and beta subunits of F1 ATP synthase"/>
    <property type="match status" value="1"/>
</dbReference>
<dbReference type="SUPFAM" id="SSF50615">
    <property type="entry name" value="N-terminal domain of alpha and beta subunits of F1 ATP synthase"/>
    <property type="match status" value="1"/>
</dbReference>
<dbReference type="SUPFAM" id="SSF52540">
    <property type="entry name" value="P-loop containing nucleoside triphosphate hydrolases"/>
    <property type="match status" value="1"/>
</dbReference>
<dbReference type="PROSITE" id="PS00152">
    <property type="entry name" value="ATPASE_ALPHA_BETA"/>
    <property type="match status" value="1"/>
</dbReference>
<reference key="1">
    <citation type="journal article" date="2007" name="PLoS Genet.">
        <title>Meningococcal genetic variation mechanisms viewed through comparative analysis of serogroup C strain FAM18.</title>
        <authorList>
            <person name="Bentley S.D."/>
            <person name="Vernikos G.S."/>
            <person name="Snyder L.A.S."/>
            <person name="Churcher C."/>
            <person name="Arrowsmith C."/>
            <person name="Chillingworth T."/>
            <person name="Cronin A."/>
            <person name="Davis P.H."/>
            <person name="Holroyd N.E."/>
            <person name="Jagels K."/>
            <person name="Maddison M."/>
            <person name="Moule S."/>
            <person name="Rabbinowitsch E."/>
            <person name="Sharp S."/>
            <person name="Unwin L."/>
            <person name="Whitehead S."/>
            <person name="Quail M.A."/>
            <person name="Achtman M."/>
            <person name="Barrell B.G."/>
            <person name="Saunders N.J."/>
            <person name="Parkhill J."/>
        </authorList>
    </citation>
    <scope>NUCLEOTIDE SEQUENCE [LARGE SCALE GENOMIC DNA]</scope>
    <source>
        <strain>ATCC 700532 / DSM 15464 / FAM18</strain>
    </source>
</reference>
<comment type="function">
    <text evidence="1">Produces ATP from ADP in the presence of a proton gradient across the membrane. The catalytic sites are hosted primarily by the beta subunits.</text>
</comment>
<comment type="catalytic activity">
    <reaction evidence="1">
        <text>ATP + H2O + 4 H(+)(in) = ADP + phosphate + 5 H(+)(out)</text>
        <dbReference type="Rhea" id="RHEA:57720"/>
        <dbReference type="ChEBI" id="CHEBI:15377"/>
        <dbReference type="ChEBI" id="CHEBI:15378"/>
        <dbReference type="ChEBI" id="CHEBI:30616"/>
        <dbReference type="ChEBI" id="CHEBI:43474"/>
        <dbReference type="ChEBI" id="CHEBI:456216"/>
        <dbReference type="EC" id="7.1.2.2"/>
    </reaction>
</comment>
<comment type="subunit">
    <text evidence="1">F-type ATPases have 2 components, CF(1) - the catalytic core - and CF(0) - the membrane proton channel. CF(1) has five subunits: alpha(3), beta(3), gamma(1), delta(1), epsilon(1). CF(0) has three main subunits: a(1), b(2) and c(9-12). The alpha and beta chains form an alternating ring which encloses part of the gamma chain. CF(1) is attached to CF(0) by a central stalk formed by the gamma and epsilon chains, while a peripheral stalk is formed by the delta and b chains.</text>
</comment>
<comment type="subcellular location">
    <subcellularLocation>
        <location evidence="1">Cell inner membrane</location>
        <topology evidence="1">Peripheral membrane protein</topology>
    </subcellularLocation>
</comment>
<comment type="similarity">
    <text evidence="1">Belongs to the ATPase alpha/beta chains family.</text>
</comment>
<sequence length="465" mass="50422">MSQGKIVQIIGAVVDVEFPRDMIPRVYDALKLDENGLTLEVQQLLGDGVVRTIAMGSSDGLKRGMTVSNTGAPITVPVGKGTLGRIVDVLGTPVDEAGPIDTDKSRAIHQAAPKFDELSSTTELLETGIKVIDLLCPFAKGGKVGLFGGAGVGKTVNMMELINNIAKAHSGLSVFAGVGERTREGNDFYHEMKDSNVLDKVAMVYGQMNEPPGNRLRVALTGLTMAEYFRDEKDENGKGRDVLFFVDNIYRYTLAGTEVSALLGRMPSAVGYQPTLAEEMGRLQERITSTQTGSITSIQAVYVPADDLTDPSPATTFAHLDATVVLSRDIASLGIYPAVDPLDSTSRQLDPMVLGQEHYDVARGVQSTLQKYKELRDIIAILGMDELSDEDKLTVMRARKIQRFLSQPFHVAEVFTGSPGKYVALRDTIAGFKAILNGEYDHLPEQAFYMVGSIEEAVEKAKTLN</sequence>
<accession>A1KW11</accession>
<organism>
    <name type="scientific">Neisseria meningitidis serogroup C / serotype 2a (strain ATCC 700532 / DSM 15464 / FAM18)</name>
    <dbReference type="NCBI Taxonomy" id="272831"/>
    <lineage>
        <taxon>Bacteria</taxon>
        <taxon>Pseudomonadati</taxon>
        <taxon>Pseudomonadota</taxon>
        <taxon>Betaproteobacteria</taxon>
        <taxon>Neisseriales</taxon>
        <taxon>Neisseriaceae</taxon>
        <taxon>Neisseria</taxon>
    </lineage>
</organism>